<gene>
    <name type="primary">gag</name>
</gene>
<proteinExistence type="inferred from homology"/>
<reference key="1">
    <citation type="journal article" date="1992" name="J. Virol.">
        <title>An infectious molecular clone of an unusual macrophage-tropic and highly cytopathic strain of human immunodeficiency virus type 1.</title>
        <authorList>
            <person name="Collman R."/>
            <person name="Balliet J.W."/>
            <person name="Gregory S.A."/>
            <person name="Friedman H."/>
            <person name="Kolson D.L."/>
            <person name="Nathanson N."/>
            <person name="Srinivasan A."/>
        </authorList>
    </citation>
    <scope>NUCLEOTIDE SEQUENCE [GENOMIC DNA]</scope>
</reference>
<protein>
    <recommendedName>
        <fullName>Gag polyprotein</fullName>
    </recommendedName>
    <alternativeName>
        <fullName>Pr55Gag</fullName>
    </alternativeName>
    <component>
        <recommendedName>
            <fullName>Matrix protein p17</fullName>
            <shortName>MA</shortName>
        </recommendedName>
    </component>
    <component>
        <recommendedName>
            <fullName>Capsid protein p24</fullName>
            <shortName>CA</shortName>
        </recommendedName>
    </component>
    <component>
        <recommendedName>
            <fullName evidence="6">Spacer peptide 1</fullName>
            <shortName>SP1</shortName>
        </recommendedName>
        <alternativeName>
            <fullName>p2</fullName>
        </alternativeName>
    </component>
    <component>
        <recommendedName>
            <fullName>Nucleocapsid protein p7</fullName>
            <shortName>NC</shortName>
        </recommendedName>
    </component>
    <component>
        <recommendedName>
            <fullName evidence="6">Spacer peptide 2</fullName>
            <shortName>SP2</shortName>
        </recommendedName>
        <alternativeName>
            <fullName>p1</fullName>
        </alternativeName>
    </component>
    <component>
        <recommendedName>
            <fullName>p6-gag</fullName>
        </recommendedName>
    </component>
</protein>
<keyword id="KW-0014">AIDS</keyword>
<keyword id="KW-0167">Capsid protein</keyword>
<keyword id="KW-1032">Host cell membrane</keyword>
<keyword id="KW-1035">Host cytoplasm</keyword>
<keyword id="KW-1039">Host endosome</keyword>
<keyword id="KW-1043">Host membrane</keyword>
<keyword id="KW-1048">Host nucleus</keyword>
<keyword id="KW-0945">Host-virus interaction</keyword>
<keyword id="KW-0449">Lipoprotein</keyword>
<keyword id="KW-0472">Membrane</keyword>
<keyword id="KW-0479">Metal-binding</keyword>
<keyword id="KW-0488">Methylation</keyword>
<keyword id="KW-0519">Myristate</keyword>
<keyword id="KW-0597">Phosphoprotein</keyword>
<keyword id="KW-1185">Reference proteome</keyword>
<keyword id="KW-0677">Repeat</keyword>
<keyword id="KW-0688">Ribosomal frameshifting</keyword>
<keyword id="KW-0694">RNA-binding</keyword>
<keyword id="KW-1198">Viral budding</keyword>
<keyword id="KW-1187">Viral budding via the host ESCRT complexes</keyword>
<keyword id="KW-0543">Viral nucleoprotein</keyword>
<keyword id="KW-1188">Viral release from host cell</keyword>
<keyword id="KW-0946">Virion</keyword>
<keyword id="KW-0862">Zinc</keyword>
<keyword id="KW-0863">Zinc-finger</keyword>
<organismHost>
    <name type="scientific">Homo sapiens</name>
    <name type="common">Human</name>
    <dbReference type="NCBI Taxonomy" id="9606"/>
</organismHost>
<name>GAG_HV1B9</name>
<organism>
    <name type="scientific">Human immunodeficiency virus type 1 group M subtype B (strain 89.6)</name>
    <name type="common">HIV-1</name>
    <dbReference type="NCBI Taxonomy" id="401671"/>
    <lineage>
        <taxon>Viruses</taxon>
        <taxon>Riboviria</taxon>
        <taxon>Pararnavirae</taxon>
        <taxon>Artverviricota</taxon>
        <taxon>Revtraviricetes</taxon>
        <taxon>Ortervirales</taxon>
        <taxon>Retroviridae</taxon>
        <taxon>Orthoretrovirinae</taxon>
        <taxon>Lentivirus</taxon>
        <taxon>Human immunodeficiency virus type 1</taxon>
    </lineage>
</organism>
<accession>Q73367</accession>
<sequence>MGARASVLSGGELDRWEKIRLRPGGKKKYKLKHIVWASRELERFAVNPSLLETSEGCRQILGQLQSSLQTGSEELKSLYNTVATLYCVHQRIEVKDTKEALDKIEEEQNKSKKKAQQAAADTGNSSQVSQNYPIVQNIQGQMVHQAISPRTLNAWVKVVEEKAFSPEVIPMFSALSEGATPQDLNTMLNTVGGHQAAMQMLKETINEEAAEWDRLHPVQAGPVAPGQMREPRGSDIAGTTSTLQEQIGWMTNNPPIPVGEIYKRWIILGLNKIVRMYSPSSILDIKQGPKEPFRDYVDRFYKTLRAEQASQEVKNWMTETLLVQNANPDCKTILKALGPGATLEEMMTACQGVGGPGHKARVLAEAMSQVTNSATIMMQRGNFRNQRKTVKCFNCGKEGHIAKNCRAPRKKGCWKCGKEGHQMKDCTERQANFLGKIWPSHKGRPGNFLQSRPEPTAPPEESFRFGEETTTPSQKQEPIDKELYPLASLRSLFGNDPSSQ</sequence>
<comment type="function">
    <molecule>Gag polyprotein</molecule>
    <text evidence="5">Mediates, with Gag-Pol polyprotein, the essential events in virion assembly, including binding the plasma membrane, making the protein-protein interactions necessary to create spherical particles, recruiting the viral Env proteins, and packaging the genomic RNA via direct interactions with the RNA packaging sequence (Psi).</text>
</comment>
<comment type="function">
    <molecule>Matrix protein p17</molecule>
    <text evidence="1 6">Targets the polyprotein to the plasma membrane via a multipartite membrane-binding signal, that includes its myristoylated N-terminus (By similarity). Matrix protein is part of the pre-integration complex. Implicated in the release from host cell mediated by Vpu. Binds to RNA (By similarity).</text>
</comment>
<comment type="function">
    <molecule>Capsid protein p24</molecule>
    <text evidence="5 6">Forms the conical core that encapsulates the genomic RNA-nucleocapsid complex in the virion. Most core are conical, with only 7% tubular. The core is constituted by capsid protein hexamer subunits. The core is disassembled soon after virion entry (By similarity). The capsid promotes immune invasion by cloaking viral DNA from CGAS detection (By similarity). Host restriction factors such as TRIM5-alpha or TRIMCyp bind retroviral capsids and cause premature capsid disassembly, leading to blocks in reverse transcription. Capsid restriction by TRIM5 is one of the factors which restricts HIV-1 to the human species. Host PIN1 apparently facilitates the virion uncoating (By similarity). On the other hand, interactions with PDZD8 or CYPA stabilize the capsid (By similarity).</text>
</comment>
<comment type="function">
    <molecule>Nucleocapsid protein p7</molecule>
    <text evidence="5">Encapsulates and protects viral dimeric unspliced genomic RNA (gRNA). Binds these RNAs through its zinc fingers. Acts as a nucleic acid chaperone which is involved in rearangement of nucleic acid secondary structure during gRNA retrotranscription. Also facilitates template switch leading to recombination. As part of the polyprotein, participates in gRNA dimerization, packaging, tRNA incorporation and virion assembly.</text>
</comment>
<comment type="function">
    <molecule>p6-gag</molecule>
    <text evidence="6">Plays a role in budding of the assembled particle by interacting with the host class E VPS proteins TSG101 and PDCD6IP/AIP1.</text>
</comment>
<comment type="subunit">
    <molecule>Gag polyprotein</molecule>
    <text evidence="4 5">Homotrimer; further assembles as hexamers of trimers. Oligomerization possibly creates a central hole into which the cytoplasmic tail of the gp41 envelope protein may be inserted. Interacts with host TRIM22; this interaction seems to disrupt proper trafficking of Gag polyprotein and may interfere with budding. Interacts with host PDZD8. When ubiquitinated, interacts (via p6-gag domain) with host PACSIN2; this interaction allows PACSIN2 recruitment to viral assembly sites and its subsequent incorporation into virions. Interacts with MOV10 (By similarity).</text>
</comment>
<comment type="subunit">
    <molecule>Matrix protein p17</molecule>
    <text evidence="5 6">Homotrimer; further assembles as hexamers of trimers. Interacts with gp41 (via C-terminus). Interacts with host CALM1; this interaction induces a conformational change in the Matrix protein, triggering exposure of the myristate group. Interacts with host AP3D1; this interaction allows the polyprotein trafficking to multivesicular bodies during virus assembly. Part of the pre-integration complex (PIC) which is composed of viral genome, matrix protein, Vpr and integrase.</text>
</comment>
<comment type="subunit">
    <molecule>Capsid protein p24</molecule>
    <text evidence="5 6">Homodimer; the homodimer further multimerizes as homohexamers or homopentamers (By similarity). Interacts with host NUP98 (By similarity). Interacts with host PPIA/CYPA; this interaction stabilizes the capsid (By similarity). Interacts with host NUP153 (By similarity). Interacts with host PDZD8; this interaction stabilizes the capsid. Interacts with host TRIM5; this interaction destabilizes the capsid (By similarity). Interacts with host CPSF6 (By similarity). Interacts with host NONO; the interaction is weak (By similarity).</text>
</comment>
<comment type="subunit">
    <molecule>Nucleocapsid protein p7</molecule>
    <text evidence="6">Interacts with host NUP98.</text>
</comment>
<comment type="subunit">
    <molecule>p6-gag</molecule>
    <text evidence="3 6">Interacts with Vpr; this interaction allows Vpr incorporation into the virion. Interacts with host TSG101. p6-gag interacts with host PDCD6IP/AIP1.</text>
</comment>
<comment type="subcellular location">
    <molecule>Gag polyprotein</molecule>
    <subcellularLocation>
        <location evidence="6">Host cell membrane</location>
        <topology evidence="6">Lipid-anchor</topology>
    </subcellularLocation>
    <subcellularLocation>
        <location evidence="6">Host endosome</location>
        <location evidence="6">Host multivesicular body</location>
    </subcellularLocation>
    <text evidence="6">These locations are probably linked to virus assembly sites. The main location is the cell membrane, but under some circumstances, late endosomal compartments can serve as productive sites for virion assembly.</text>
</comment>
<comment type="subcellular location">
    <molecule>Matrix protein p17</molecule>
    <subcellularLocation>
        <location evidence="6">Virion membrane</location>
        <topology evidence="6">Lipid-anchor</topology>
    </subcellularLocation>
    <subcellularLocation>
        <location evidence="1">Host nucleus</location>
    </subcellularLocation>
    <subcellularLocation>
        <location evidence="1">Host cytoplasm</location>
    </subcellularLocation>
</comment>
<comment type="subcellular location">
    <molecule>Capsid protein p24</molecule>
    <subcellularLocation>
        <location evidence="6">Virion</location>
    </subcellularLocation>
</comment>
<comment type="subcellular location">
    <molecule>Nucleocapsid protein p7</molecule>
    <subcellularLocation>
        <location evidence="6">Virion</location>
    </subcellularLocation>
</comment>
<comment type="alternative products">
    <event type="ribosomal frameshifting"/>
    <isoform>
        <id>Q73367-1</id>
        <name>Gag polyprotein</name>
        <sequence type="displayed"/>
    </isoform>
    <isoform>
        <id>Q73368-1</id>
        <name>Gag-Pol polyprotein</name>
        <sequence type="external"/>
    </isoform>
    <text>Translation results in the formation of the Gag polyprotein most of the time. Ribosomal frameshifting at the gag-pol genes boundary occurs at low frequency and produces the Gag-Pol polyprotein. This strategy of translation probably allows the virus to modulate the quantity of each viral protein. Maintenance of a correct Gag to Gag-Pol ratio is essential for RNA dimerization and viral infectivity.</text>
</comment>
<comment type="domain">
    <text evidence="6">Late-budding domains (L domains) are short sequence motifs essential for viral particle budding. They recruit proteins of the host ESCRT machinery (Endosomal Sorting Complex Required for Transport) or ESCRT-associated proteins. p6-gag contains two L domains: a PTAP/PSAP motif, which interacts with the UEV domain of TSG101 and a LYPX(n)L motif which interacts with PDCD6IP/AIP1.</text>
</comment>
<comment type="PTM">
    <text evidence="6">Gag-Pol polyprotein: Specific enzymatic cleavages by the viral protease yield mature proteins.</text>
</comment>
<comment type="PTM">
    <molecule>Matrix protein p17</molecule>
    <text evidence="5">Tyrosine phosphorylated presumably in the virion by a host kinase. Phosphorylation is apparently not a major regulator of membrane association.</text>
</comment>
<comment type="PTM">
    <text evidence="6">Capsid protein p24 is phosphorylated possibly by host MAPK1; this phosphorylation is necessary for Pin1-mediated virion uncoating.</text>
</comment>
<comment type="PTM">
    <text evidence="2">Nucleocapsid protein p7 is methylated by host PRMT6, impairing its function by reducing RNA annealing and the initiation of reverse transcription.</text>
</comment>
<comment type="miscellaneous">
    <text>The infectious clone pNL4-3 is a chimeric provirus that consists of DNA from HIV isolates NY5 (5' half) and BRU (3' half).</text>
</comment>
<comment type="miscellaneous">
    <text>HIV-1 lineages are divided in three main groups, M (for Major), O (for Outlier), and N (for New, or Non-M, Non-O). The vast majority of strains found worldwide belong to the group M. Group O seems to be endemic to and largely confined to Cameroon and neighboring countries in West Central Africa, where these viruses represent a small minority of HIV-1 strains. The group N is represented by a limited number of isolates from Cameroonian persons. The group M is further subdivided in 9 clades or subtypes (A to D, F to H, J and K).</text>
</comment>
<comment type="miscellaneous">
    <molecule>Isoform Gag polyprotein</molecule>
    <text>Produced by conventional translation.</text>
</comment>
<comment type="similarity">
    <text evidence="11">Belongs to the primate lentivirus group gag polyprotein family.</text>
</comment>
<evidence type="ECO:0000250" key="1"/>
<evidence type="ECO:0000250" key="2">
    <source>
        <dbReference type="UniProtKB" id="P03347"/>
    </source>
</evidence>
<evidence type="ECO:0000250" key="3">
    <source>
        <dbReference type="UniProtKB" id="P03348"/>
    </source>
</evidence>
<evidence type="ECO:0000250" key="4">
    <source>
        <dbReference type="UniProtKB" id="P03349"/>
    </source>
</evidence>
<evidence type="ECO:0000250" key="5">
    <source>
        <dbReference type="UniProtKB" id="P04591"/>
    </source>
</evidence>
<evidence type="ECO:0000250" key="6">
    <source>
        <dbReference type="UniProtKB" id="P12493"/>
    </source>
</evidence>
<evidence type="ECO:0000250" key="7">
    <source>
        <dbReference type="UniProtKB" id="P12497"/>
    </source>
</evidence>
<evidence type="ECO:0000255" key="8"/>
<evidence type="ECO:0000255" key="9">
    <source>
        <dbReference type="PROSITE-ProRule" id="PRU00047"/>
    </source>
</evidence>
<evidence type="ECO:0000256" key="10">
    <source>
        <dbReference type="SAM" id="MobiDB-lite"/>
    </source>
</evidence>
<evidence type="ECO:0000305" key="11"/>
<feature type="initiator methionine" description="Removed; by host" evidence="8">
    <location>
        <position position="1"/>
    </location>
</feature>
<feature type="chain" id="PRO_0000261211" description="Gag polyprotein">
    <location>
        <begin position="2"/>
        <end position="500"/>
    </location>
</feature>
<feature type="chain" id="PRO_0000250967" description="Matrix protein p17" evidence="1">
    <location>
        <begin position="2"/>
        <end position="132"/>
    </location>
</feature>
<feature type="chain" id="PRO_0000250968" description="Capsid protein p24" evidence="1">
    <location>
        <begin position="133"/>
        <end position="363"/>
    </location>
</feature>
<feature type="peptide" id="PRO_0000250969" description="Spacer peptide 1" evidence="1">
    <location>
        <begin position="364"/>
        <end position="377"/>
    </location>
</feature>
<feature type="chain" id="PRO_0000250970" description="Nucleocapsid protein p7" evidence="1">
    <location>
        <begin position="378"/>
        <end position="432"/>
    </location>
</feature>
<feature type="peptide" id="PRO_0000250971" description="Spacer peptide 2" evidence="1">
    <location>
        <begin position="433"/>
        <end position="448"/>
    </location>
</feature>
<feature type="chain" id="PRO_0000250972" description="p6-gag" evidence="1">
    <location>
        <begin position="449"/>
        <end position="500"/>
    </location>
</feature>
<feature type="zinc finger region" description="CCHC-type 1" evidence="9">
    <location>
        <begin position="390"/>
        <end position="407"/>
    </location>
</feature>
<feature type="zinc finger region" description="CCHC-type 2" evidence="9">
    <location>
        <begin position="411"/>
        <end position="428"/>
    </location>
</feature>
<feature type="region of interest" description="Interaction with Gp41" evidence="6">
    <location>
        <begin position="7"/>
        <end position="31"/>
    </location>
</feature>
<feature type="region of interest" description="Interaction with host CALM1" evidence="5">
    <location>
        <begin position="8"/>
        <end position="43"/>
    </location>
</feature>
<feature type="region of interest" description="Interaction with host AP3D1" evidence="7">
    <location>
        <begin position="12"/>
        <end position="19"/>
    </location>
</feature>
<feature type="region of interest" description="Interaction with membrane phosphatidylinositol 4,5-bisphosphate and RNA" evidence="6">
    <location>
        <begin position="14"/>
        <end position="33"/>
    </location>
</feature>
<feature type="region of interest" description="Interaction with membrane phosphatidylinositol 4,5-bisphosphate" evidence="6">
    <location>
        <begin position="73"/>
        <end position="77"/>
    </location>
</feature>
<feature type="region of interest" description="Disordered" evidence="10">
    <location>
        <begin position="106"/>
        <end position="127"/>
    </location>
</feature>
<feature type="region of interest" description="Interaction with host PPIA/CYPA and NUP153" evidence="6">
    <location>
        <begin position="189"/>
        <end position="227"/>
    </location>
</feature>
<feature type="region of interest" description="PPIA/CYPA-binding loop" evidence="5">
    <location>
        <begin position="217"/>
        <end position="225"/>
    </location>
</feature>
<feature type="region of interest" description="Dimerization/Multimerization of capsid protein p24" evidence="5">
    <location>
        <begin position="277"/>
        <end position="363"/>
    </location>
</feature>
<feature type="region of interest" description="Disordered" evidence="10">
    <location>
        <begin position="438"/>
        <end position="482"/>
    </location>
</feature>
<feature type="short sequence motif" description="Nuclear export signal" evidence="1">
    <location>
        <begin position="16"/>
        <end position="22"/>
    </location>
</feature>
<feature type="short sequence motif" description="Nuclear localization signal" evidence="1">
    <location>
        <begin position="26"/>
        <end position="32"/>
    </location>
</feature>
<feature type="short sequence motif" description="PTAP/PSAP motif">
    <location>
        <begin position="455"/>
        <end position="458"/>
    </location>
</feature>
<feature type="short sequence motif" description="LYPX(n)L motif">
    <location>
        <begin position="483"/>
        <end position="492"/>
    </location>
</feature>
<feature type="site" description="Cleavage; by viral protease" evidence="1">
    <location>
        <begin position="132"/>
        <end position="133"/>
    </location>
</feature>
<feature type="site" description="Cleavage; by viral protease" evidence="1">
    <location>
        <begin position="363"/>
        <end position="364"/>
    </location>
</feature>
<feature type="site" description="Cleavage; by viral protease" evidence="1">
    <location>
        <begin position="377"/>
        <end position="378"/>
    </location>
</feature>
<feature type="site" description="Cleavage; by viral protease" evidence="1">
    <location>
        <begin position="432"/>
        <end position="433"/>
    </location>
</feature>
<feature type="site" description="Cleavage; by viral protease" evidence="1">
    <location>
        <begin position="448"/>
        <end position="449"/>
    </location>
</feature>
<feature type="modified residue" description="Phosphoserine; by host MAPK1" evidence="6">
    <location>
        <position position="148"/>
    </location>
</feature>
<feature type="modified residue" description="Asymmetric dimethylarginine; in Nucleocapsid protein p7; by host PRMT6" evidence="1">
    <location>
        <position position="387"/>
    </location>
</feature>
<feature type="modified residue" description="Asymmetric dimethylarginine; in Nucleocapsid protein p7; by host PRMT6" evidence="1">
    <location>
        <position position="409"/>
    </location>
</feature>
<feature type="lipid moiety-binding region" description="N-myristoyl glycine; by host" evidence="1">
    <location>
        <position position="2"/>
    </location>
</feature>
<dbReference type="EMBL" id="U39362">
    <property type="protein sequence ID" value="AAA81036.1"/>
    <property type="molecule type" value="Genomic_DNA"/>
</dbReference>
<dbReference type="SMR" id="Q73367"/>
<dbReference type="PRO" id="PR:Q73367"/>
<dbReference type="Proteomes" id="UP000007691">
    <property type="component" value="Genome"/>
</dbReference>
<dbReference type="GO" id="GO:0042025">
    <property type="term" value="C:host cell nucleus"/>
    <property type="evidence" value="ECO:0007669"/>
    <property type="project" value="UniProtKB-SubCell"/>
</dbReference>
<dbReference type="GO" id="GO:0020002">
    <property type="term" value="C:host cell plasma membrane"/>
    <property type="evidence" value="ECO:0007669"/>
    <property type="project" value="UniProtKB-SubCell"/>
</dbReference>
<dbReference type="GO" id="GO:0072494">
    <property type="term" value="C:host multivesicular body"/>
    <property type="evidence" value="ECO:0007669"/>
    <property type="project" value="UniProtKB-SubCell"/>
</dbReference>
<dbReference type="GO" id="GO:0016020">
    <property type="term" value="C:membrane"/>
    <property type="evidence" value="ECO:0007669"/>
    <property type="project" value="UniProtKB-KW"/>
</dbReference>
<dbReference type="GO" id="GO:0019013">
    <property type="term" value="C:viral nucleocapsid"/>
    <property type="evidence" value="ECO:0007669"/>
    <property type="project" value="UniProtKB-KW"/>
</dbReference>
<dbReference type="GO" id="GO:0055036">
    <property type="term" value="C:virion membrane"/>
    <property type="evidence" value="ECO:0007669"/>
    <property type="project" value="UniProtKB-SubCell"/>
</dbReference>
<dbReference type="GO" id="GO:0003723">
    <property type="term" value="F:RNA binding"/>
    <property type="evidence" value="ECO:0007669"/>
    <property type="project" value="UniProtKB-KW"/>
</dbReference>
<dbReference type="GO" id="GO:0005198">
    <property type="term" value="F:structural molecule activity"/>
    <property type="evidence" value="ECO:0007669"/>
    <property type="project" value="InterPro"/>
</dbReference>
<dbReference type="GO" id="GO:0008270">
    <property type="term" value="F:zinc ion binding"/>
    <property type="evidence" value="ECO:0007669"/>
    <property type="project" value="UniProtKB-KW"/>
</dbReference>
<dbReference type="GO" id="GO:0039702">
    <property type="term" value="P:viral budding via host ESCRT complex"/>
    <property type="evidence" value="ECO:0007669"/>
    <property type="project" value="UniProtKB-KW"/>
</dbReference>
<dbReference type="GO" id="GO:0075523">
    <property type="term" value="P:viral translational frameshifting"/>
    <property type="evidence" value="ECO:0007669"/>
    <property type="project" value="UniProtKB-KW"/>
</dbReference>
<dbReference type="FunFam" id="1.10.1200.30:FF:000001">
    <property type="entry name" value="Gag polyprotein"/>
    <property type="match status" value="1"/>
</dbReference>
<dbReference type="FunFam" id="1.10.150.90:FF:000001">
    <property type="entry name" value="Gag polyprotein"/>
    <property type="match status" value="1"/>
</dbReference>
<dbReference type="FunFam" id="1.10.375.10:FF:000001">
    <property type="entry name" value="Gag polyprotein"/>
    <property type="match status" value="1"/>
</dbReference>
<dbReference type="FunFam" id="1.20.5.760:FF:000001">
    <property type="entry name" value="Gag polyprotein"/>
    <property type="match status" value="1"/>
</dbReference>
<dbReference type="FunFam" id="4.10.60.10:FF:000001">
    <property type="entry name" value="Gag polyprotein"/>
    <property type="match status" value="1"/>
</dbReference>
<dbReference type="Gene3D" id="1.10.1200.30">
    <property type="match status" value="1"/>
</dbReference>
<dbReference type="Gene3D" id="6.10.250.390">
    <property type="match status" value="1"/>
</dbReference>
<dbReference type="Gene3D" id="1.10.375.10">
    <property type="entry name" value="Human Immunodeficiency Virus Type 1 Capsid Protein"/>
    <property type="match status" value="1"/>
</dbReference>
<dbReference type="Gene3D" id="1.10.150.90">
    <property type="entry name" value="Immunodeficiency lentiviruses, gag gene matrix protein p17"/>
    <property type="match status" value="1"/>
</dbReference>
<dbReference type="Gene3D" id="1.20.5.760">
    <property type="entry name" value="Single helix bin"/>
    <property type="match status" value="1"/>
</dbReference>
<dbReference type="Gene3D" id="4.10.60.10">
    <property type="entry name" value="Zinc finger, CCHC-type"/>
    <property type="match status" value="1"/>
</dbReference>
<dbReference type="InterPro" id="IPR045345">
    <property type="entry name" value="Gag_p24_C"/>
</dbReference>
<dbReference type="InterPro" id="IPR014817">
    <property type="entry name" value="Gag_p6"/>
</dbReference>
<dbReference type="InterPro" id="IPR000071">
    <property type="entry name" value="Lentvrl_matrix_N"/>
</dbReference>
<dbReference type="InterPro" id="IPR012344">
    <property type="entry name" value="Matrix_HIV/RSV_N"/>
</dbReference>
<dbReference type="InterPro" id="IPR050195">
    <property type="entry name" value="Primate_lentivir_Gag_pol-like"/>
</dbReference>
<dbReference type="InterPro" id="IPR008916">
    <property type="entry name" value="Retrov_capsid_C"/>
</dbReference>
<dbReference type="InterPro" id="IPR008919">
    <property type="entry name" value="Retrov_capsid_N"/>
</dbReference>
<dbReference type="InterPro" id="IPR010999">
    <property type="entry name" value="Retrovr_matrix"/>
</dbReference>
<dbReference type="InterPro" id="IPR001878">
    <property type="entry name" value="Znf_CCHC"/>
</dbReference>
<dbReference type="InterPro" id="IPR036875">
    <property type="entry name" value="Znf_CCHC_sf"/>
</dbReference>
<dbReference type="PANTHER" id="PTHR40389:SF4">
    <property type="match status" value="1"/>
</dbReference>
<dbReference type="PANTHER" id="PTHR40389">
    <property type="entry name" value="ENDOGENOUS RETROVIRUS GROUP K MEMBER 24 GAG POLYPROTEIN-RELATED"/>
    <property type="match status" value="1"/>
</dbReference>
<dbReference type="Pfam" id="PF00540">
    <property type="entry name" value="Gag_p17"/>
    <property type="match status" value="1"/>
</dbReference>
<dbReference type="Pfam" id="PF00607">
    <property type="entry name" value="Gag_p24"/>
    <property type="match status" value="1"/>
</dbReference>
<dbReference type="Pfam" id="PF19317">
    <property type="entry name" value="Gag_p24_C"/>
    <property type="match status" value="1"/>
</dbReference>
<dbReference type="Pfam" id="PF08705">
    <property type="entry name" value="Gag_p6"/>
    <property type="match status" value="1"/>
</dbReference>
<dbReference type="Pfam" id="PF00098">
    <property type="entry name" value="zf-CCHC"/>
    <property type="match status" value="2"/>
</dbReference>
<dbReference type="PRINTS" id="PR00234">
    <property type="entry name" value="HIV1MATRIX"/>
</dbReference>
<dbReference type="SMART" id="SM00343">
    <property type="entry name" value="ZnF_C2HC"/>
    <property type="match status" value="2"/>
</dbReference>
<dbReference type="SUPFAM" id="SSF47836">
    <property type="entry name" value="Retroviral matrix proteins"/>
    <property type="match status" value="1"/>
</dbReference>
<dbReference type="SUPFAM" id="SSF47353">
    <property type="entry name" value="Retrovirus capsid dimerization domain-like"/>
    <property type="match status" value="1"/>
</dbReference>
<dbReference type="SUPFAM" id="SSF47943">
    <property type="entry name" value="Retrovirus capsid protein, N-terminal core domain"/>
    <property type="match status" value="1"/>
</dbReference>
<dbReference type="SUPFAM" id="SSF57756">
    <property type="entry name" value="Retrovirus zinc finger-like domains"/>
    <property type="match status" value="1"/>
</dbReference>
<dbReference type="PROSITE" id="PS50158">
    <property type="entry name" value="ZF_CCHC"/>
    <property type="match status" value="2"/>
</dbReference>